<name>TG198_CAEEL</name>
<accession>P34387</accession>
<accession>Q9NCF7</accession>
<comment type="similarity">
    <text evidence="2">Belongs to the DNase II family.</text>
</comment>
<dbReference type="EC" id="3.1.-.-"/>
<dbReference type="EMBL" id="FO080289">
    <property type="protein sequence ID" value="CCD62642.1"/>
    <property type="molecule type" value="Genomic_DNA"/>
</dbReference>
<dbReference type="EMBL" id="AF220526">
    <property type="protein sequence ID" value="AAF43009.1"/>
    <property type="molecule type" value="mRNA"/>
</dbReference>
<dbReference type="PIR" id="S44793">
    <property type="entry name" value="S44793"/>
</dbReference>
<dbReference type="RefSeq" id="NP_498817.1">
    <property type="nucleotide sequence ID" value="NM_066416.4"/>
</dbReference>
<dbReference type="SMR" id="P34387"/>
<dbReference type="FunCoup" id="P34387">
    <property type="interactions" value="164"/>
</dbReference>
<dbReference type="STRING" id="6239.F09G8.2.1"/>
<dbReference type="GlyCosmos" id="P34387">
    <property type="glycosylation" value="1 site, No reported glycans"/>
</dbReference>
<dbReference type="PaxDb" id="6239-F09G8.2"/>
<dbReference type="PeptideAtlas" id="P34387"/>
<dbReference type="EnsemblMetazoa" id="F09G8.2.1">
    <property type="protein sequence ID" value="F09G8.2.1"/>
    <property type="gene ID" value="WBGene00007056"/>
</dbReference>
<dbReference type="GeneID" id="176166"/>
<dbReference type="KEGG" id="cel:CELE_F09G8.2"/>
<dbReference type="UCSC" id="F09G8.2">
    <property type="organism name" value="c. elegans"/>
</dbReference>
<dbReference type="AGR" id="WB:WBGene00007056"/>
<dbReference type="CTD" id="176166"/>
<dbReference type="WormBase" id="F09G8.2">
    <property type="protein sequence ID" value="CE20662"/>
    <property type="gene ID" value="WBGene00007056"/>
    <property type="gene designation" value="crn-7"/>
</dbReference>
<dbReference type="eggNOG" id="KOG3825">
    <property type="taxonomic scope" value="Eukaryota"/>
</dbReference>
<dbReference type="GeneTree" id="ENSGT00390000002634"/>
<dbReference type="HOGENOM" id="CLU_053867_0_1_1"/>
<dbReference type="InParanoid" id="P34387"/>
<dbReference type="OMA" id="FWISKPI"/>
<dbReference type="OrthoDB" id="10261598at2759"/>
<dbReference type="PhylomeDB" id="P34387"/>
<dbReference type="BRENDA" id="3.1.22.1">
    <property type="organism ID" value="1045"/>
</dbReference>
<dbReference type="Reactome" id="R-CEL-432720">
    <property type="pathway name" value="Lysosome Vesicle Biogenesis"/>
</dbReference>
<dbReference type="PRO" id="PR:P34387"/>
<dbReference type="Proteomes" id="UP000001940">
    <property type="component" value="Chromosome III"/>
</dbReference>
<dbReference type="Bgee" id="WBGene00007056">
    <property type="expression patterns" value="Expressed in material anatomical entity and 4 other cell types or tissues"/>
</dbReference>
<dbReference type="GO" id="GO:0004531">
    <property type="term" value="F:deoxyribonuclease II activity"/>
    <property type="evidence" value="ECO:0000315"/>
    <property type="project" value="WormBase"/>
</dbReference>
<dbReference type="GO" id="GO:0006309">
    <property type="term" value="P:apoptotic DNA fragmentation"/>
    <property type="evidence" value="ECO:0000315"/>
    <property type="project" value="WormBase"/>
</dbReference>
<dbReference type="GO" id="GO:0002785">
    <property type="term" value="P:negative regulation of antimicrobial peptide production"/>
    <property type="evidence" value="ECO:0000315"/>
    <property type="project" value="WormBase"/>
</dbReference>
<dbReference type="CDD" id="cd09120">
    <property type="entry name" value="PLDc_DNaseII_1"/>
    <property type="match status" value="1"/>
</dbReference>
<dbReference type="CDD" id="cd09121">
    <property type="entry name" value="PLDc_DNaseII_2"/>
    <property type="match status" value="1"/>
</dbReference>
<dbReference type="InterPro" id="IPR004947">
    <property type="entry name" value="DNase_II"/>
</dbReference>
<dbReference type="PANTHER" id="PTHR10858:SF30">
    <property type="entry name" value="CELL-DEATH-RELATED NUCLEASE 7"/>
    <property type="match status" value="1"/>
</dbReference>
<dbReference type="PANTHER" id="PTHR10858">
    <property type="entry name" value="DEOXYRIBONUCLEASE II"/>
    <property type="match status" value="1"/>
</dbReference>
<dbReference type="Pfam" id="PF03265">
    <property type="entry name" value="DNase_II"/>
    <property type="match status" value="1"/>
</dbReference>
<reference key="1">
    <citation type="journal article" date="1994" name="Nature">
        <title>2.2 Mb of contiguous nucleotide sequence from chromosome III of C. elegans.</title>
        <authorList>
            <person name="Wilson R."/>
            <person name="Ainscough R."/>
            <person name="Anderson K."/>
            <person name="Baynes C."/>
            <person name="Berks M."/>
            <person name="Bonfield J."/>
            <person name="Burton J."/>
            <person name="Connell M."/>
            <person name="Copsey T."/>
            <person name="Cooper J."/>
            <person name="Coulson A."/>
            <person name="Craxton M."/>
            <person name="Dear S."/>
            <person name="Du Z."/>
            <person name="Durbin R."/>
            <person name="Favello A."/>
            <person name="Fraser A."/>
            <person name="Fulton L."/>
            <person name="Gardner A."/>
            <person name="Green P."/>
            <person name="Hawkins T."/>
            <person name="Hillier L."/>
            <person name="Jier M."/>
            <person name="Johnston L."/>
            <person name="Jones M."/>
            <person name="Kershaw J."/>
            <person name="Kirsten J."/>
            <person name="Laisster N."/>
            <person name="Latreille P."/>
            <person name="Lightning J."/>
            <person name="Lloyd C."/>
            <person name="Mortimore B."/>
            <person name="O'Callaghan M."/>
            <person name="Parsons J."/>
            <person name="Percy C."/>
            <person name="Rifken L."/>
            <person name="Roopra A."/>
            <person name="Saunders D."/>
            <person name="Shownkeen R."/>
            <person name="Sims M."/>
            <person name="Smaldon N."/>
            <person name="Smith A."/>
            <person name="Smith M."/>
            <person name="Sonnhammer E."/>
            <person name="Staden R."/>
            <person name="Sulston J."/>
            <person name="Thierry-Mieg J."/>
            <person name="Thomas K."/>
            <person name="Vaudin M."/>
            <person name="Vaughan K."/>
            <person name="Waterston R."/>
            <person name="Watson A."/>
            <person name="Weinstock L."/>
            <person name="Wilkinson-Sproat J."/>
            <person name="Wohldman P."/>
        </authorList>
    </citation>
    <scope>NUCLEOTIDE SEQUENCE [LARGE SCALE GENOMIC DNA]</scope>
    <source>
        <strain>Bristol N2</strain>
    </source>
</reference>
<reference key="2">
    <citation type="journal article" date="1998" name="Science">
        <title>Genome sequence of the nematode C. elegans: a platform for investigating biology.</title>
        <authorList>
            <consortium name="The C. elegans sequencing consortium"/>
        </authorList>
    </citation>
    <scope>NUCLEOTIDE SEQUENCE [LARGE SCALE GENOMIC DNA]</scope>
    <source>
        <strain>Bristol N2</strain>
    </source>
</reference>
<reference key="3">
    <citation type="journal article" date="2000" name="Gene">
        <title>Deoxyribonuclease II: structure and chromosomal localization of the murine gene, and comparison with the genomic structure of the human and three C. elegans homologs.</title>
        <authorList>
            <person name="Krieser R.J."/>
            <person name="Eastman A."/>
        </authorList>
    </citation>
    <scope>NUCLEOTIDE SEQUENCE [MRNA] OF 26-357</scope>
</reference>
<proteinExistence type="evidence at transcript level"/>
<sequence>MRLYFVLIFSVIFTTGNGKIQCKNMRGKSVDWFVVYKLPKLSGAGTSGKEFVYFDAESSDWTRGNDINDPNVAVGATVSQVYSADKSNNFWFMYSDDDPIKSADSYRGHAKGVSLFDSTTGFWLIHSVPNFPPIKSFSYPNTAEKYGQSFFCASMEVQHLTELAEHWKYIQATPYIINIPEKYATRFPTLKNVEAKQSLPRSATQFWISKPIKTVQGVTLMAYAKHKKFDGDIWNDLISRQNKVTLAVESWLNGSGDDIHTTCTSTSQTHDVTEMRVTGLNFASSKDHSKWAVSNSQTNPIVCFGDMNRQKSQLKRGGGALCIQNRNLWQLYHSFVIQVEPCKSSSHFSMFQTIATLLSAAGLVSKI</sequence>
<gene>
    <name type="primary">crn-7</name>
    <name type="synonym">tag-198</name>
    <name type="ORF">F09G8.2</name>
</gene>
<evidence type="ECO:0000255" key="1"/>
<evidence type="ECO:0000305" key="2"/>
<keyword id="KW-0325">Glycoprotein</keyword>
<keyword id="KW-0378">Hydrolase</keyword>
<keyword id="KW-1185">Reference proteome</keyword>
<keyword id="KW-0732">Signal</keyword>
<protein>
    <recommendedName>
        <fullName>Cell-death-related nuclease 7</fullName>
        <ecNumber>3.1.-.-</ecNumber>
    </recommendedName>
</protein>
<organism>
    <name type="scientific">Caenorhabditis elegans</name>
    <dbReference type="NCBI Taxonomy" id="6239"/>
    <lineage>
        <taxon>Eukaryota</taxon>
        <taxon>Metazoa</taxon>
        <taxon>Ecdysozoa</taxon>
        <taxon>Nematoda</taxon>
        <taxon>Chromadorea</taxon>
        <taxon>Rhabditida</taxon>
        <taxon>Rhabditina</taxon>
        <taxon>Rhabditomorpha</taxon>
        <taxon>Rhabditoidea</taxon>
        <taxon>Rhabditidae</taxon>
        <taxon>Peloderinae</taxon>
        <taxon>Caenorhabditis</taxon>
    </lineage>
</organism>
<feature type="signal peptide" evidence="1">
    <location>
        <begin position="1"/>
        <end position="18"/>
    </location>
</feature>
<feature type="chain" id="PRO_0000007300" description="Cell-death-related nuclease 7">
    <location>
        <begin position="19"/>
        <end position="367"/>
    </location>
</feature>
<feature type="glycosylation site" description="N-linked (GlcNAc...) asparagine" evidence="1">
    <location>
        <position position="253"/>
    </location>
</feature>
<feature type="sequence conflict" description="In Ref. 3; AAF43009." evidence="2" ref="3">
    <original>G</original>
    <variation>E</variation>
    <location>
        <position position="305"/>
    </location>
</feature>